<proteinExistence type="inferred from homology"/>
<protein>
    <recommendedName>
        <fullName evidence="1">Thiazole synthase</fullName>
        <ecNumber evidence="1">2.8.1.10</ecNumber>
    </recommendedName>
</protein>
<organism>
    <name type="scientific">Bacillus cereus (strain ATCC 14579 / DSM 31 / CCUG 7414 / JCM 2152 / NBRC 15305 / NCIMB 9373 / NCTC 2599 / NRRL B-3711)</name>
    <dbReference type="NCBI Taxonomy" id="226900"/>
    <lineage>
        <taxon>Bacteria</taxon>
        <taxon>Bacillati</taxon>
        <taxon>Bacillota</taxon>
        <taxon>Bacilli</taxon>
        <taxon>Bacillales</taxon>
        <taxon>Bacillaceae</taxon>
        <taxon>Bacillus</taxon>
        <taxon>Bacillus cereus group</taxon>
    </lineage>
</organism>
<feature type="chain" id="PRO_0000162781" description="Thiazole synthase">
    <location>
        <begin position="1"/>
        <end position="258"/>
    </location>
</feature>
<feature type="active site" description="Schiff-base intermediate with DXP" evidence="1">
    <location>
        <position position="98"/>
    </location>
</feature>
<feature type="binding site" evidence="1">
    <location>
        <position position="159"/>
    </location>
    <ligand>
        <name>1-deoxy-D-xylulose 5-phosphate</name>
        <dbReference type="ChEBI" id="CHEBI:57792"/>
    </ligand>
</feature>
<feature type="binding site" evidence="1">
    <location>
        <begin position="185"/>
        <end position="186"/>
    </location>
    <ligand>
        <name>1-deoxy-D-xylulose 5-phosphate</name>
        <dbReference type="ChEBI" id="CHEBI:57792"/>
    </ligand>
</feature>
<feature type="binding site" evidence="1">
    <location>
        <begin position="207"/>
        <end position="208"/>
    </location>
    <ligand>
        <name>1-deoxy-D-xylulose 5-phosphate</name>
        <dbReference type="ChEBI" id="CHEBI:57792"/>
    </ligand>
</feature>
<name>THIG_BACCR</name>
<gene>
    <name evidence="1" type="primary">thiG</name>
    <name type="ordered locus">BC_0749</name>
</gene>
<accession>Q81HQ5</accession>
<keyword id="KW-0963">Cytoplasm</keyword>
<keyword id="KW-1185">Reference proteome</keyword>
<keyword id="KW-0704">Schiff base</keyword>
<keyword id="KW-0784">Thiamine biosynthesis</keyword>
<keyword id="KW-0808">Transferase</keyword>
<dbReference type="EC" id="2.8.1.10" evidence="1"/>
<dbReference type="EMBL" id="AE016877">
    <property type="protein sequence ID" value="AAP07740.1"/>
    <property type="molecule type" value="Genomic_DNA"/>
</dbReference>
<dbReference type="RefSeq" id="NP_830539.1">
    <property type="nucleotide sequence ID" value="NC_004722.1"/>
</dbReference>
<dbReference type="SMR" id="Q81HQ5"/>
<dbReference type="STRING" id="226900.BC_0749"/>
<dbReference type="MetOSite" id="Q81HQ5"/>
<dbReference type="KEGG" id="bce:BC0749"/>
<dbReference type="PATRIC" id="fig|226900.8.peg.688"/>
<dbReference type="HOGENOM" id="CLU_062233_1_0_9"/>
<dbReference type="UniPathway" id="UPA00060"/>
<dbReference type="Proteomes" id="UP000001417">
    <property type="component" value="Chromosome"/>
</dbReference>
<dbReference type="GO" id="GO:1902508">
    <property type="term" value="C:2-iminoacetate synthase complex"/>
    <property type="evidence" value="ECO:0000318"/>
    <property type="project" value="GO_Central"/>
</dbReference>
<dbReference type="GO" id="GO:0005737">
    <property type="term" value="C:cytoplasm"/>
    <property type="evidence" value="ECO:0007669"/>
    <property type="project" value="UniProtKB-SubCell"/>
</dbReference>
<dbReference type="GO" id="GO:1990107">
    <property type="term" value="F:thiazole synthase activity"/>
    <property type="evidence" value="ECO:0007669"/>
    <property type="project" value="UniProtKB-EC"/>
</dbReference>
<dbReference type="GO" id="GO:0009228">
    <property type="term" value="P:thiamine biosynthetic process"/>
    <property type="evidence" value="ECO:0000318"/>
    <property type="project" value="GO_Central"/>
</dbReference>
<dbReference type="GO" id="GO:0009229">
    <property type="term" value="P:thiamine diphosphate biosynthetic process"/>
    <property type="evidence" value="ECO:0000318"/>
    <property type="project" value="GO_Central"/>
</dbReference>
<dbReference type="CDD" id="cd04728">
    <property type="entry name" value="ThiG"/>
    <property type="match status" value="1"/>
</dbReference>
<dbReference type="FunFam" id="3.20.20.70:FF:000049">
    <property type="entry name" value="Thiazole synthase"/>
    <property type="match status" value="1"/>
</dbReference>
<dbReference type="Gene3D" id="3.20.20.70">
    <property type="entry name" value="Aldolase class I"/>
    <property type="match status" value="1"/>
</dbReference>
<dbReference type="HAMAP" id="MF_00443">
    <property type="entry name" value="ThiG"/>
    <property type="match status" value="1"/>
</dbReference>
<dbReference type="InterPro" id="IPR013785">
    <property type="entry name" value="Aldolase_TIM"/>
</dbReference>
<dbReference type="InterPro" id="IPR033983">
    <property type="entry name" value="Thiazole_synthase_ThiG"/>
</dbReference>
<dbReference type="InterPro" id="IPR008867">
    <property type="entry name" value="ThiG"/>
</dbReference>
<dbReference type="PANTHER" id="PTHR34266">
    <property type="entry name" value="THIAZOLE SYNTHASE"/>
    <property type="match status" value="1"/>
</dbReference>
<dbReference type="PANTHER" id="PTHR34266:SF2">
    <property type="entry name" value="THIAZOLE SYNTHASE"/>
    <property type="match status" value="1"/>
</dbReference>
<dbReference type="Pfam" id="PF05690">
    <property type="entry name" value="ThiG"/>
    <property type="match status" value="1"/>
</dbReference>
<dbReference type="SUPFAM" id="SSF110399">
    <property type="entry name" value="ThiG-like"/>
    <property type="match status" value="1"/>
</dbReference>
<sequence>MIMLNIGPFSFHSRLLLGTGKFPDFDVQQKAIDVSEAEILTFAVRRMDIFDAKQPNLLEKLDVKKYTLLPNTAGAKNAEEAVRIAKLAKASGLCDMIKVEVIGDDRTLLPDPVETLKASEMLLEEGFIVLPYTSDDVVLARKLQELGVHAIMPGASPIGSGLGIVNPLNLSFIIEQATVPVIVDAGIGSPADAAFAMELGADGVLLNTAVSGAKDPIKMAQAMKLSIEAGRLGFEAVRIARKRCATASSPLEGMSVVE</sequence>
<comment type="function">
    <text evidence="1">Catalyzes the rearrangement of 1-deoxy-D-xylulose 5-phosphate (DXP) to produce the thiazole phosphate moiety of thiamine. Sulfur is provided by the thiocarboxylate moiety of the carrier protein ThiS. In vitro, sulfur can be provided by H(2)S.</text>
</comment>
<comment type="catalytic activity">
    <reaction evidence="1">
        <text>[ThiS sulfur-carrier protein]-C-terminal-Gly-aminoethanethioate + 2-iminoacetate + 1-deoxy-D-xylulose 5-phosphate = [ThiS sulfur-carrier protein]-C-terminal Gly-Gly + 2-[(2R,5Z)-2-carboxy-4-methylthiazol-5(2H)-ylidene]ethyl phosphate + 2 H2O + H(+)</text>
        <dbReference type="Rhea" id="RHEA:26297"/>
        <dbReference type="Rhea" id="RHEA-COMP:12909"/>
        <dbReference type="Rhea" id="RHEA-COMP:19908"/>
        <dbReference type="ChEBI" id="CHEBI:15377"/>
        <dbReference type="ChEBI" id="CHEBI:15378"/>
        <dbReference type="ChEBI" id="CHEBI:57792"/>
        <dbReference type="ChEBI" id="CHEBI:62899"/>
        <dbReference type="ChEBI" id="CHEBI:77846"/>
        <dbReference type="ChEBI" id="CHEBI:90778"/>
        <dbReference type="ChEBI" id="CHEBI:232372"/>
        <dbReference type="EC" id="2.8.1.10"/>
    </reaction>
</comment>
<comment type="pathway">
    <text evidence="1">Cofactor biosynthesis; thiamine diphosphate biosynthesis.</text>
</comment>
<comment type="subunit">
    <text evidence="1">Homotetramer. Forms heterodimers with either ThiH or ThiS.</text>
</comment>
<comment type="subcellular location">
    <subcellularLocation>
        <location evidence="1">Cytoplasm</location>
    </subcellularLocation>
</comment>
<comment type="similarity">
    <text evidence="1">Belongs to the ThiG family.</text>
</comment>
<evidence type="ECO:0000255" key="1">
    <source>
        <dbReference type="HAMAP-Rule" id="MF_00443"/>
    </source>
</evidence>
<reference key="1">
    <citation type="journal article" date="2003" name="Nature">
        <title>Genome sequence of Bacillus cereus and comparative analysis with Bacillus anthracis.</title>
        <authorList>
            <person name="Ivanova N."/>
            <person name="Sorokin A."/>
            <person name="Anderson I."/>
            <person name="Galleron N."/>
            <person name="Candelon B."/>
            <person name="Kapatral V."/>
            <person name="Bhattacharyya A."/>
            <person name="Reznik G."/>
            <person name="Mikhailova N."/>
            <person name="Lapidus A."/>
            <person name="Chu L."/>
            <person name="Mazur M."/>
            <person name="Goltsman E."/>
            <person name="Larsen N."/>
            <person name="D'Souza M."/>
            <person name="Walunas T."/>
            <person name="Grechkin Y."/>
            <person name="Pusch G."/>
            <person name="Haselkorn R."/>
            <person name="Fonstein M."/>
            <person name="Ehrlich S.D."/>
            <person name="Overbeek R."/>
            <person name="Kyrpides N.C."/>
        </authorList>
    </citation>
    <scope>NUCLEOTIDE SEQUENCE [LARGE SCALE GENOMIC DNA]</scope>
    <source>
        <strain>ATCC 14579 / DSM 31 / CCUG 7414 / JCM 2152 / NBRC 15305 / NCIMB 9373 / NCTC 2599 / NRRL B-3711</strain>
    </source>
</reference>